<evidence type="ECO:0000250" key="1">
    <source>
        <dbReference type="UniProtKB" id="P0A9G6"/>
    </source>
</evidence>
<evidence type="ECO:0000250" key="2">
    <source>
        <dbReference type="UniProtKB" id="P9WKK7"/>
    </source>
</evidence>
<evidence type="ECO:0000305" key="3"/>
<reference key="1">
    <citation type="journal article" date="2001" name="Nature">
        <title>Complete genome sequence of Salmonella enterica serovar Typhimurium LT2.</title>
        <authorList>
            <person name="McClelland M."/>
            <person name="Sanderson K.E."/>
            <person name="Spieth J."/>
            <person name="Clifton S.W."/>
            <person name="Latreille P."/>
            <person name="Courtney L."/>
            <person name="Porwollik S."/>
            <person name="Ali J."/>
            <person name="Dante M."/>
            <person name="Du F."/>
            <person name="Hou S."/>
            <person name="Layman D."/>
            <person name="Leonard S."/>
            <person name="Nguyen C."/>
            <person name="Scott K."/>
            <person name="Holmes A."/>
            <person name="Grewal N."/>
            <person name="Mulvaney E."/>
            <person name="Ryan E."/>
            <person name="Sun H."/>
            <person name="Florea L."/>
            <person name="Miller W."/>
            <person name="Stoneking T."/>
            <person name="Nhan M."/>
            <person name="Waterston R."/>
            <person name="Wilson R.K."/>
        </authorList>
    </citation>
    <scope>NUCLEOTIDE SEQUENCE [LARGE SCALE GENOMIC DNA]</scope>
    <source>
        <strain>LT2 / SGSC1412 / ATCC 700720</strain>
    </source>
</reference>
<reference key="2">
    <citation type="journal article" date="1997" name="Genetics">
        <title>Size and sequence polymorphism in the isocitrate dehydrogenase kinase/phosphatase gene (aceK) and flanking regions in Salmonella enterica and Escherichia coli.</title>
        <authorList>
            <person name="Nelson K."/>
            <person name="Wang F.S."/>
            <person name="Boyd E.F."/>
            <person name="Selander R.K."/>
        </authorList>
    </citation>
    <scope>NUCLEOTIDE SEQUENCE [GENOMIC DNA] OF 365-434</scope>
    <source>
        <strain>S2978</strain>
        <strain>S2979</strain>
        <strain>S2980</strain>
        <strain>S2983</strain>
        <strain>S2985</strain>
        <strain>S2993</strain>
        <strain>S2995</strain>
        <strain>S3013</strain>
        <strain>S3014</strain>
        <strain>S3015</strain>
        <strain>S3027</strain>
        <strain>S3041</strain>
        <strain>S3044</strain>
        <strain>S3057</strain>
        <strain>S3333</strain>
        <strain>S4194</strain>
    </source>
</reference>
<gene>
    <name type="primary">aceA</name>
    <name type="ordered locus">STM4184</name>
</gene>
<keyword id="KW-0329">Glyoxylate bypass</keyword>
<keyword id="KW-0456">Lyase</keyword>
<keyword id="KW-0460">Magnesium</keyword>
<keyword id="KW-0479">Metal-binding</keyword>
<keyword id="KW-1185">Reference proteome</keyword>
<keyword id="KW-0816">Tricarboxylic acid cycle</keyword>
<accession>P51066</accession>
<organism>
    <name type="scientific">Salmonella typhimurium (strain LT2 / SGSC1412 / ATCC 700720)</name>
    <dbReference type="NCBI Taxonomy" id="99287"/>
    <lineage>
        <taxon>Bacteria</taxon>
        <taxon>Pseudomonadati</taxon>
        <taxon>Pseudomonadota</taxon>
        <taxon>Gammaproteobacteria</taxon>
        <taxon>Enterobacterales</taxon>
        <taxon>Enterobacteriaceae</taxon>
        <taxon>Salmonella</taxon>
    </lineage>
</organism>
<name>ACEA_SALTY</name>
<proteinExistence type="inferred from homology"/>
<comment type="function">
    <text evidence="1">Involved in the metabolic adaptation in response to environmental changes. Catalyzes the reversible formation of succinate and glyoxylate from isocitrate, a key step of the glyoxylate cycle, which operates as an anaplerotic route for replenishing the tricarboxylic acid cycle during growth on fatty acid substrates.</text>
</comment>
<comment type="catalytic activity">
    <reaction evidence="1">
        <text>D-threo-isocitrate = glyoxylate + succinate</text>
        <dbReference type="Rhea" id="RHEA:13245"/>
        <dbReference type="ChEBI" id="CHEBI:15562"/>
        <dbReference type="ChEBI" id="CHEBI:30031"/>
        <dbReference type="ChEBI" id="CHEBI:36655"/>
        <dbReference type="EC" id="4.1.3.1"/>
    </reaction>
</comment>
<comment type="cofactor">
    <cofactor evidence="1">
        <name>Mg(2+)</name>
        <dbReference type="ChEBI" id="CHEBI:18420"/>
    </cofactor>
</comment>
<comment type="pathway">
    <text evidence="1">Carbohydrate metabolism; glyoxylate cycle; (S)-malate from isocitrate: step 1/2.</text>
</comment>
<comment type="subunit">
    <text evidence="1">Homotetramer.</text>
</comment>
<comment type="similarity">
    <text evidence="3">Belongs to the isocitrate lyase/PEP mutase superfamily. Isocitrate lyase family.</text>
</comment>
<dbReference type="EC" id="4.1.3.1" evidence="1"/>
<dbReference type="EMBL" id="AE006468">
    <property type="protein sequence ID" value="AAL23008.1"/>
    <property type="molecule type" value="Genomic_DNA"/>
</dbReference>
<dbReference type="EMBL" id="U43344">
    <property type="protein sequence ID" value="AAC43867.1"/>
    <property type="molecule type" value="Genomic_DNA"/>
</dbReference>
<dbReference type="EMBL" id="U43345">
    <property type="protein sequence ID" value="AAC43869.1"/>
    <property type="molecule type" value="Genomic_DNA"/>
</dbReference>
<dbReference type="EMBL" id="U43346">
    <property type="protein sequence ID" value="AAC43871.1"/>
    <property type="molecule type" value="Genomic_DNA"/>
</dbReference>
<dbReference type="EMBL" id="U43347">
    <property type="protein sequence ID" value="AAC43872.1"/>
    <property type="molecule type" value="Genomic_DNA"/>
</dbReference>
<dbReference type="EMBL" id="U43348">
    <property type="protein sequence ID" value="AAC43874.1"/>
    <property type="molecule type" value="Genomic_DNA"/>
</dbReference>
<dbReference type="EMBL" id="U43349">
    <property type="protein sequence ID" value="AAC43876.1"/>
    <property type="molecule type" value="Genomic_DNA"/>
</dbReference>
<dbReference type="EMBL" id="U43350">
    <property type="protein sequence ID" value="AAC43878.1"/>
    <property type="molecule type" value="Genomic_DNA"/>
</dbReference>
<dbReference type="EMBL" id="U43351">
    <property type="protein sequence ID" value="AAC43880.1"/>
    <property type="molecule type" value="Genomic_DNA"/>
</dbReference>
<dbReference type="EMBL" id="U43352">
    <property type="protein sequence ID" value="AAC43882.1"/>
    <property type="molecule type" value="Genomic_DNA"/>
</dbReference>
<dbReference type="EMBL" id="U43353">
    <property type="protein sequence ID" value="AAC43884.1"/>
    <property type="molecule type" value="Genomic_DNA"/>
</dbReference>
<dbReference type="EMBL" id="U43354">
    <property type="protein sequence ID" value="AAC43886.1"/>
    <property type="molecule type" value="Genomic_DNA"/>
</dbReference>
<dbReference type="EMBL" id="U43355">
    <property type="protein sequence ID" value="AAC43888.1"/>
    <property type="molecule type" value="Genomic_DNA"/>
</dbReference>
<dbReference type="EMBL" id="U43356">
    <property type="protein sequence ID" value="AAC43890.1"/>
    <property type="molecule type" value="Genomic_DNA"/>
</dbReference>
<dbReference type="EMBL" id="U43357">
    <property type="protein sequence ID" value="AAC43892.1"/>
    <property type="molecule type" value="Genomic_DNA"/>
</dbReference>
<dbReference type="EMBL" id="U43358">
    <property type="protein sequence ID" value="AAC43894.1"/>
    <property type="molecule type" value="Genomic_DNA"/>
</dbReference>
<dbReference type="EMBL" id="U43359">
    <property type="protein sequence ID" value="AAC43896.1"/>
    <property type="molecule type" value="Genomic_DNA"/>
</dbReference>
<dbReference type="RefSeq" id="NP_463049.1">
    <property type="nucleotide sequence ID" value="NC_003197.2"/>
</dbReference>
<dbReference type="RefSeq" id="WP_000857881.1">
    <property type="nucleotide sequence ID" value="NC_003197.2"/>
</dbReference>
<dbReference type="SMR" id="P51066"/>
<dbReference type="STRING" id="99287.STM4184"/>
<dbReference type="PaxDb" id="99287-STM4184"/>
<dbReference type="GeneID" id="1255710"/>
<dbReference type="KEGG" id="stm:STM4184"/>
<dbReference type="PATRIC" id="fig|99287.12.peg.4396"/>
<dbReference type="HOGENOM" id="CLU_019214_2_0_6"/>
<dbReference type="OMA" id="YVSGWQV"/>
<dbReference type="PhylomeDB" id="P51066"/>
<dbReference type="BioCyc" id="SENT99287:STM4184-MONOMER"/>
<dbReference type="UniPathway" id="UPA00703">
    <property type="reaction ID" value="UER00719"/>
</dbReference>
<dbReference type="Proteomes" id="UP000001014">
    <property type="component" value="Chromosome"/>
</dbReference>
<dbReference type="GO" id="GO:0004451">
    <property type="term" value="F:isocitrate lyase activity"/>
    <property type="evidence" value="ECO:0000318"/>
    <property type="project" value="GO_Central"/>
</dbReference>
<dbReference type="GO" id="GO:0046872">
    <property type="term" value="F:metal ion binding"/>
    <property type="evidence" value="ECO:0007669"/>
    <property type="project" value="UniProtKB-KW"/>
</dbReference>
<dbReference type="GO" id="GO:0006097">
    <property type="term" value="P:glyoxylate cycle"/>
    <property type="evidence" value="ECO:0007669"/>
    <property type="project" value="UniProtKB-UniPathway"/>
</dbReference>
<dbReference type="GO" id="GO:0006099">
    <property type="term" value="P:tricarboxylic acid cycle"/>
    <property type="evidence" value="ECO:0007669"/>
    <property type="project" value="UniProtKB-KW"/>
</dbReference>
<dbReference type="CDD" id="cd00377">
    <property type="entry name" value="ICL_PEPM"/>
    <property type="match status" value="1"/>
</dbReference>
<dbReference type="FunFam" id="3.20.20.60:FF:000005">
    <property type="entry name" value="Isocitrate lyase"/>
    <property type="match status" value="1"/>
</dbReference>
<dbReference type="Gene3D" id="3.20.20.60">
    <property type="entry name" value="Phosphoenolpyruvate-binding domains"/>
    <property type="match status" value="1"/>
</dbReference>
<dbReference type="InterPro" id="IPR039556">
    <property type="entry name" value="ICL/PEPM"/>
</dbReference>
<dbReference type="InterPro" id="IPR006254">
    <property type="entry name" value="Isocitrate_lyase"/>
</dbReference>
<dbReference type="InterPro" id="IPR018523">
    <property type="entry name" value="Isocitrate_lyase_ph_CS"/>
</dbReference>
<dbReference type="InterPro" id="IPR015813">
    <property type="entry name" value="Pyrv/PenolPyrv_kinase-like_dom"/>
</dbReference>
<dbReference type="InterPro" id="IPR040442">
    <property type="entry name" value="Pyrv_kinase-like_dom_sf"/>
</dbReference>
<dbReference type="NCBIfam" id="TIGR01346">
    <property type="entry name" value="isocit_lyase"/>
    <property type="match status" value="2"/>
</dbReference>
<dbReference type="NCBIfam" id="NF011645">
    <property type="entry name" value="PRK15063.1"/>
    <property type="match status" value="1"/>
</dbReference>
<dbReference type="PANTHER" id="PTHR21631:SF3">
    <property type="entry name" value="BIFUNCTIONAL GLYOXYLATE CYCLE PROTEIN"/>
    <property type="match status" value="1"/>
</dbReference>
<dbReference type="PANTHER" id="PTHR21631">
    <property type="entry name" value="ISOCITRATE LYASE/MALATE SYNTHASE"/>
    <property type="match status" value="1"/>
</dbReference>
<dbReference type="Pfam" id="PF00463">
    <property type="entry name" value="ICL"/>
    <property type="match status" value="2"/>
</dbReference>
<dbReference type="PIRSF" id="PIRSF001362">
    <property type="entry name" value="Isocit_lyase"/>
    <property type="match status" value="1"/>
</dbReference>
<dbReference type="SUPFAM" id="SSF51621">
    <property type="entry name" value="Phosphoenolpyruvate/pyruvate domain"/>
    <property type="match status" value="1"/>
</dbReference>
<dbReference type="PROSITE" id="PS00161">
    <property type="entry name" value="ISOCITRATE_LYASE"/>
    <property type="match status" value="1"/>
</dbReference>
<feature type="chain" id="PRO_0000068776" description="Isocitrate lyase">
    <location>
        <begin position="1"/>
        <end position="434"/>
    </location>
</feature>
<feature type="active site" description="Proton acceptor" evidence="1">
    <location>
        <position position="195"/>
    </location>
</feature>
<feature type="binding site" evidence="1">
    <location>
        <begin position="91"/>
        <end position="93"/>
    </location>
    <ligand>
        <name>substrate</name>
    </ligand>
</feature>
<feature type="binding site" evidence="1">
    <location>
        <position position="157"/>
    </location>
    <ligand>
        <name>Mg(2+)</name>
        <dbReference type="ChEBI" id="CHEBI:18420"/>
    </ligand>
</feature>
<feature type="binding site" evidence="2">
    <location>
        <begin position="196"/>
        <end position="197"/>
    </location>
    <ligand>
        <name>substrate</name>
    </ligand>
</feature>
<feature type="binding site" evidence="1">
    <location>
        <position position="232"/>
    </location>
    <ligand>
        <name>substrate</name>
    </ligand>
</feature>
<feature type="binding site" evidence="2">
    <location>
        <begin position="317"/>
        <end position="321"/>
    </location>
    <ligand>
        <name>substrate</name>
    </ligand>
</feature>
<feature type="binding site" evidence="2">
    <location>
        <position position="351"/>
    </location>
    <ligand>
        <name>substrate</name>
    </ligand>
</feature>
<feature type="sequence variant" description="In strain: S3041.">
    <original>A</original>
    <variation>G</variation>
    <location>
        <position position="390"/>
    </location>
</feature>
<feature type="sequence variant" description="In strain: S3013, S3014, S3015, S3027 and S3041.">
    <original>D</original>
    <variation>E</variation>
    <location>
        <position position="392"/>
    </location>
</feature>
<feature type="sequence variant" description="In strain: S2978, S2979, S2980, S2983, S2985, S2993, S2995, S3013, S3014, S3015, S3027, S3041, S3044, S3057 and S3333.">
    <original>A</original>
    <variation>S</variation>
    <location>
        <position position="432"/>
    </location>
</feature>
<sequence length="434" mass="47563">MKTRTQQIEELQKEWTQPRWEGITRPYSAEEVVKLRGSVNPECTLAQLGAAKMWRLLHGEAKKGYINSLGALTGGQALQQAKAGIEAIYLSGWQVAADANLASSMYPDQSLYPANSVPAVVDRINNTFRRADQIQWASGIEPNDPRYVDYFLPIVADAEAGFGGVLNAFELMKSMIEAGAAAVHFEDQLASVKKCGHMGGKVLVPTQEAIQKLVAARLAADVMGVPTLVIARTDADAADLITSDCDPYDSGFITGERTSEGFYRTHAGIEQAISRGLAYAPYADLVWCETSTPDLELARRFADAIHAKYPGKLLAYNCSPSFNWQKNLDDKTIASFQQQLSDMGYKYQFITLAGIHSMWFNMFDLAHAYAQGEGMKHYVEKVQQPEFAAAKDGYTFVSHQQEVGTGYFDKVTTIIQGGASSVTALTGSTEEAQF</sequence>
<protein>
    <recommendedName>
        <fullName evidence="1">Isocitrate lyase</fullName>
        <shortName evidence="1">ICL</shortName>
        <ecNumber evidence="1">4.1.3.1</ecNumber>
    </recommendedName>
    <alternativeName>
        <fullName evidence="1">Isocitrase</fullName>
    </alternativeName>
    <alternativeName>
        <fullName evidence="1">Isocitratase</fullName>
    </alternativeName>
</protein>